<proteinExistence type="inferred from homology"/>
<gene>
    <name evidence="1" type="primary">mnmE</name>
    <name evidence="1" type="synonym">trmE</name>
    <name type="ordered locus">Mpop_1658</name>
</gene>
<organism>
    <name type="scientific">Methylorubrum populi (strain ATCC BAA-705 / NCIMB 13946 / BJ001)</name>
    <name type="common">Methylobacterium populi</name>
    <dbReference type="NCBI Taxonomy" id="441620"/>
    <lineage>
        <taxon>Bacteria</taxon>
        <taxon>Pseudomonadati</taxon>
        <taxon>Pseudomonadota</taxon>
        <taxon>Alphaproteobacteria</taxon>
        <taxon>Hyphomicrobiales</taxon>
        <taxon>Methylobacteriaceae</taxon>
        <taxon>Methylorubrum</taxon>
    </lineage>
</organism>
<feature type="chain" id="PRO_0000345832" description="tRNA modification GTPase MnmE">
    <location>
        <begin position="1"/>
        <end position="444"/>
    </location>
</feature>
<feature type="domain" description="TrmE-type G">
    <location>
        <begin position="224"/>
        <end position="368"/>
    </location>
</feature>
<feature type="binding site" evidence="1">
    <location>
        <position position="28"/>
    </location>
    <ligand>
        <name>(6S)-5-formyl-5,6,7,8-tetrahydrofolate</name>
        <dbReference type="ChEBI" id="CHEBI:57457"/>
    </ligand>
</feature>
<feature type="binding site" evidence="1">
    <location>
        <position position="86"/>
    </location>
    <ligand>
        <name>(6S)-5-formyl-5,6,7,8-tetrahydrofolate</name>
        <dbReference type="ChEBI" id="CHEBI:57457"/>
    </ligand>
</feature>
<feature type="binding site" evidence="1">
    <location>
        <position position="126"/>
    </location>
    <ligand>
        <name>(6S)-5-formyl-5,6,7,8-tetrahydrofolate</name>
        <dbReference type="ChEBI" id="CHEBI:57457"/>
    </ligand>
</feature>
<feature type="binding site" evidence="1">
    <location>
        <begin position="234"/>
        <end position="239"/>
    </location>
    <ligand>
        <name>GTP</name>
        <dbReference type="ChEBI" id="CHEBI:37565"/>
    </ligand>
</feature>
<feature type="binding site" evidence="1">
    <location>
        <position position="234"/>
    </location>
    <ligand>
        <name>K(+)</name>
        <dbReference type="ChEBI" id="CHEBI:29103"/>
    </ligand>
</feature>
<feature type="binding site" evidence="1">
    <location>
        <position position="238"/>
    </location>
    <ligand>
        <name>Mg(2+)</name>
        <dbReference type="ChEBI" id="CHEBI:18420"/>
    </ligand>
</feature>
<feature type="binding site" evidence="1">
    <location>
        <begin position="253"/>
        <end position="259"/>
    </location>
    <ligand>
        <name>GTP</name>
        <dbReference type="ChEBI" id="CHEBI:37565"/>
    </ligand>
</feature>
<feature type="binding site" evidence="1">
    <location>
        <position position="253"/>
    </location>
    <ligand>
        <name>K(+)</name>
        <dbReference type="ChEBI" id="CHEBI:29103"/>
    </ligand>
</feature>
<feature type="binding site" evidence="1">
    <location>
        <position position="255"/>
    </location>
    <ligand>
        <name>K(+)</name>
        <dbReference type="ChEBI" id="CHEBI:29103"/>
    </ligand>
</feature>
<feature type="binding site" evidence="1">
    <location>
        <position position="258"/>
    </location>
    <ligand>
        <name>K(+)</name>
        <dbReference type="ChEBI" id="CHEBI:29103"/>
    </ligand>
</feature>
<feature type="binding site" evidence="1">
    <location>
        <position position="259"/>
    </location>
    <ligand>
        <name>Mg(2+)</name>
        <dbReference type="ChEBI" id="CHEBI:18420"/>
    </ligand>
</feature>
<feature type="binding site" evidence="1">
    <location>
        <begin position="278"/>
        <end position="281"/>
    </location>
    <ligand>
        <name>GTP</name>
        <dbReference type="ChEBI" id="CHEBI:37565"/>
    </ligand>
</feature>
<feature type="binding site" evidence="1">
    <location>
        <position position="444"/>
    </location>
    <ligand>
        <name>(6S)-5-formyl-5,6,7,8-tetrahydrofolate</name>
        <dbReference type="ChEBI" id="CHEBI:57457"/>
    </ligand>
</feature>
<name>MNME_METPB</name>
<dbReference type="EC" id="3.6.-.-" evidence="1"/>
<dbReference type="EMBL" id="CP001029">
    <property type="protein sequence ID" value="ACB79822.1"/>
    <property type="molecule type" value="Genomic_DNA"/>
</dbReference>
<dbReference type="RefSeq" id="WP_012453569.1">
    <property type="nucleotide sequence ID" value="NC_010725.1"/>
</dbReference>
<dbReference type="SMR" id="B1ZGG9"/>
<dbReference type="STRING" id="441620.Mpop_1658"/>
<dbReference type="KEGG" id="mpo:Mpop_1658"/>
<dbReference type="eggNOG" id="COG0486">
    <property type="taxonomic scope" value="Bacteria"/>
</dbReference>
<dbReference type="HOGENOM" id="CLU_019624_3_1_5"/>
<dbReference type="OrthoDB" id="9805918at2"/>
<dbReference type="Proteomes" id="UP000007136">
    <property type="component" value="Chromosome"/>
</dbReference>
<dbReference type="GO" id="GO:0005737">
    <property type="term" value="C:cytoplasm"/>
    <property type="evidence" value="ECO:0007669"/>
    <property type="project" value="UniProtKB-SubCell"/>
</dbReference>
<dbReference type="GO" id="GO:0005525">
    <property type="term" value="F:GTP binding"/>
    <property type="evidence" value="ECO:0007669"/>
    <property type="project" value="UniProtKB-UniRule"/>
</dbReference>
<dbReference type="GO" id="GO:0003924">
    <property type="term" value="F:GTPase activity"/>
    <property type="evidence" value="ECO:0007669"/>
    <property type="project" value="UniProtKB-UniRule"/>
</dbReference>
<dbReference type="GO" id="GO:0046872">
    <property type="term" value="F:metal ion binding"/>
    <property type="evidence" value="ECO:0007669"/>
    <property type="project" value="UniProtKB-KW"/>
</dbReference>
<dbReference type="GO" id="GO:0030488">
    <property type="term" value="P:tRNA methylation"/>
    <property type="evidence" value="ECO:0007669"/>
    <property type="project" value="TreeGrafter"/>
</dbReference>
<dbReference type="GO" id="GO:0002098">
    <property type="term" value="P:tRNA wobble uridine modification"/>
    <property type="evidence" value="ECO:0007669"/>
    <property type="project" value="TreeGrafter"/>
</dbReference>
<dbReference type="CDD" id="cd04164">
    <property type="entry name" value="trmE"/>
    <property type="match status" value="1"/>
</dbReference>
<dbReference type="CDD" id="cd14858">
    <property type="entry name" value="TrmE_N"/>
    <property type="match status" value="1"/>
</dbReference>
<dbReference type="FunFam" id="3.30.1360.120:FF:000007">
    <property type="entry name" value="tRNA modification GTPase GTPBP3, mitochondrial"/>
    <property type="match status" value="1"/>
</dbReference>
<dbReference type="Gene3D" id="3.40.50.300">
    <property type="entry name" value="P-loop containing nucleotide triphosphate hydrolases"/>
    <property type="match status" value="1"/>
</dbReference>
<dbReference type="Gene3D" id="3.30.1360.120">
    <property type="entry name" value="Probable tRNA modification gtpase trme, domain 1"/>
    <property type="match status" value="1"/>
</dbReference>
<dbReference type="Gene3D" id="1.20.120.430">
    <property type="entry name" value="tRNA modification GTPase MnmE domain 2"/>
    <property type="match status" value="1"/>
</dbReference>
<dbReference type="HAMAP" id="MF_00379">
    <property type="entry name" value="GTPase_MnmE"/>
    <property type="match status" value="1"/>
</dbReference>
<dbReference type="InterPro" id="IPR031168">
    <property type="entry name" value="G_TrmE"/>
</dbReference>
<dbReference type="InterPro" id="IPR006073">
    <property type="entry name" value="GTP-bd"/>
</dbReference>
<dbReference type="InterPro" id="IPR018948">
    <property type="entry name" value="GTP-bd_TrmE_N"/>
</dbReference>
<dbReference type="InterPro" id="IPR004520">
    <property type="entry name" value="GTPase_MnmE"/>
</dbReference>
<dbReference type="InterPro" id="IPR027368">
    <property type="entry name" value="MnmE_dom2"/>
</dbReference>
<dbReference type="InterPro" id="IPR025867">
    <property type="entry name" value="MnmE_helical"/>
</dbReference>
<dbReference type="InterPro" id="IPR027417">
    <property type="entry name" value="P-loop_NTPase"/>
</dbReference>
<dbReference type="InterPro" id="IPR005225">
    <property type="entry name" value="Small_GTP-bd"/>
</dbReference>
<dbReference type="InterPro" id="IPR027266">
    <property type="entry name" value="TrmE/GcvT_dom1"/>
</dbReference>
<dbReference type="NCBIfam" id="NF003661">
    <property type="entry name" value="PRK05291.1-3"/>
    <property type="match status" value="1"/>
</dbReference>
<dbReference type="NCBIfam" id="TIGR00231">
    <property type="entry name" value="small_GTP"/>
    <property type="match status" value="1"/>
</dbReference>
<dbReference type="PANTHER" id="PTHR42714">
    <property type="entry name" value="TRNA MODIFICATION GTPASE GTPBP3"/>
    <property type="match status" value="1"/>
</dbReference>
<dbReference type="PANTHER" id="PTHR42714:SF2">
    <property type="entry name" value="TRNA MODIFICATION GTPASE GTPBP3, MITOCHONDRIAL"/>
    <property type="match status" value="1"/>
</dbReference>
<dbReference type="Pfam" id="PF01926">
    <property type="entry name" value="MMR_HSR1"/>
    <property type="match status" value="1"/>
</dbReference>
<dbReference type="Pfam" id="PF12631">
    <property type="entry name" value="MnmE_helical"/>
    <property type="match status" value="1"/>
</dbReference>
<dbReference type="Pfam" id="PF10396">
    <property type="entry name" value="TrmE_N"/>
    <property type="match status" value="1"/>
</dbReference>
<dbReference type="PRINTS" id="PR00326">
    <property type="entry name" value="GTP1OBG"/>
</dbReference>
<dbReference type="SUPFAM" id="SSF52540">
    <property type="entry name" value="P-loop containing nucleoside triphosphate hydrolases"/>
    <property type="match status" value="1"/>
</dbReference>
<dbReference type="SUPFAM" id="SSF116878">
    <property type="entry name" value="TrmE connector domain"/>
    <property type="match status" value="1"/>
</dbReference>
<dbReference type="PROSITE" id="PS51709">
    <property type="entry name" value="G_TRME"/>
    <property type="match status" value="1"/>
</dbReference>
<evidence type="ECO:0000255" key="1">
    <source>
        <dbReference type="HAMAP-Rule" id="MF_00379"/>
    </source>
</evidence>
<sequence length="444" mass="45739">MTDALPVREETIFAPASGFGRAAVAVVRVSGPAAGPALDQLAGGRPEPRRLSLRRLRDPGTGNILDQALVAWLPGPATATGEDMAELHLHGGLAVRAAVLRALGRVPGCRPAEAGAFSRRAFLNGRIDLTEAEGIADLIDAETEAQRVQALRQLDGALGRQVAAWRETGIELLAGAEAALDFADEGDVDEDGLDAALAGRAAALRDAIRAALADGRRGERLREGFCVVLAGAPNAGKSTLLNALSGRDAAIVSDIPGTTRDAIEVRCDLGGLPVVLVDTAGLRETADVIEAEGVRRTHHRIRSADLVLHLVPADGEAGPEDFAEVPVLRVRTKSDLPSGAPGEGGLAVSAVTGAGLDALLDAIQGSAASALGGGDALVTRERHREALSRAAGHLDRVATAPAGFPPELVAEDLRLAVRALGEVGGHVGVEEMLDRLFAGFCIGK</sequence>
<keyword id="KW-0963">Cytoplasm</keyword>
<keyword id="KW-0342">GTP-binding</keyword>
<keyword id="KW-0378">Hydrolase</keyword>
<keyword id="KW-0460">Magnesium</keyword>
<keyword id="KW-0479">Metal-binding</keyword>
<keyword id="KW-0547">Nucleotide-binding</keyword>
<keyword id="KW-0630">Potassium</keyword>
<keyword id="KW-0819">tRNA processing</keyword>
<comment type="function">
    <text evidence="1">Exhibits a very high intrinsic GTPase hydrolysis rate. Involved in the addition of a carboxymethylaminomethyl (cmnm) group at the wobble position (U34) of certain tRNAs, forming tRNA-cmnm(5)s(2)U34.</text>
</comment>
<comment type="cofactor">
    <cofactor evidence="1">
        <name>K(+)</name>
        <dbReference type="ChEBI" id="CHEBI:29103"/>
    </cofactor>
    <text evidence="1">Binds 1 potassium ion per subunit.</text>
</comment>
<comment type="subunit">
    <text evidence="1">Homodimer. Heterotetramer of two MnmE and two MnmG subunits.</text>
</comment>
<comment type="subcellular location">
    <subcellularLocation>
        <location evidence="1">Cytoplasm</location>
    </subcellularLocation>
</comment>
<comment type="similarity">
    <text evidence="1">Belongs to the TRAFAC class TrmE-Era-EngA-EngB-Septin-like GTPase superfamily. TrmE GTPase family.</text>
</comment>
<accession>B1ZGG9</accession>
<reference key="1">
    <citation type="submission" date="2008-04" db="EMBL/GenBank/DDBJ databases">
        <title>Complete sequence of chromosome of Methylobacterium populi BJ001.</title>
        <authorList>
            <consortium name="US DOE Joint Genome Institute"/>
            <person name="Copeland A."/>
            <person name="Lucas S."/>
            <person name="Lapidus A."/>
            <person name="Glavina del Rio T."/>
            <person name="Dalin E."/>
            <person name="Tice H."/>
            <person name="Bruce D."/>
            <person name="Goodwin L."/>
            <person name="Pitluck S."/>
            <person name="Chertkov O."/>
            <person name="Brettin T."/>
            <person name="Detter J.C."/>
            <person name="Han C."/>
            <person name="Kuske C.R."/>
            <person name="Schmutz J."/>
            <person name="Larimer F."/>
            <person name="Land M."/>
            <person name="Hauser L."/>
            <person name="Kyrpides N."/>
            <person name="Mikhailova N."/>
            <person name="Marx C."/>
            <person name="Richardson P."/>
        </authorList>
    </citation>
    <scope>NUCLEOTIDE SEQUENCE [LARGE SCALE GENOMIC DNA]</scope>
    <source>
        <strain>ATCC BAA-705 / NCIMB 13946 / BJ001</strain>
    </source>
</reference>
<protein>
    <recommendedName>
        <fullName evidence="1">tRNA modification GTPase MnmE</fullName>
        <ecNumber evidence="1">3.6.-.-</ecNumber>
    </recommendedName>
</protein>